<keyword id="KW-0298">Galactitol metabolism</keyword>
<evidence type="ECO:0000250" key="1"/>
<evidence type="ECO:0000269" key="2">
    <source>
    </source>
</evidence>
<evidence type="ECO:0000305" key="3"/>
<comment type="function">
    <text evidence="2">Component of the tagatose-1,6-bisphosphate aldolase GatYZ that is required for full activity and stability of the Y subunit. Could have a chaperone-like function for the proper and stable folding of GatY. When expressed alone, GatZ does not show any aldolase activity. Is involved in the catabolism of galactitol.</text>
</comment>
<comment type="pathway">
    <text>Carbohydrate metabolism; D-tagatose 6-phosphate degradation; D-glyceraldehyde 3-phosphate and glycerone phosphate from D-tagatose 6-phosphate: step 2/2.</text>
</comment>
<comment type="subunit">
    <text evidence="1">Forms a complex with GatY.</text>
</comment>
<comment type="induction">
    <text evidence="2">By galactitol.</text>
</comment>
<comment type="similarity">
    <text evidence="3">Belongs to the GatZ/KbaZ family. GatZ subfamily.</text>
</comment>
<proteinExistence type="evidence at protein level"/>
<dbReference type="EMBL" id="AF416702">
    <property type="protein sequence ID" value="AAL60169.1"/>
    <property type="molecule type" value="Genomic_DNA"/>
</dbReference>
<dbReference type="SMR" id="Q8VS12"/>
<dbReference type="eggNOG" id="COG4573">
    <property type="taxonomic scope" value="Bacteria"/>
</dbReference>
<dbReference type="UniPathway" id="UPA00704">
    <property type="reaction ID" value="UER00716"/>
</dbReference>
<dbReference type="GO" id="GO:0005886">
    <property type="term" value="C:plasma membrane"/>
    <property type="evidence" value="ECO:0007669"/>
    <property type="project" value="TreeGrafter"/>
</dbReference>
<dbReference type="GO" id="GO:2001059">
    <property type="term" value="P:D-tagatose 6-phosphate catabolic process"/>
    <property type="evidence" value="ECO:0007669"/>
    <property type="project" value="UniProtKB-UniRule"/>
</dbReference>
<dbReference type="GO" id="GO:0019402">
    <property type="term" value="P:galactitol metabolic process"/>
    <property type="evidence" value="ECO:0007669"/>
    <property type="project" value="UniProtKB-KW"/>
</dbReference>
<dbReference type="GO" id="GO:0009401">
    <property type="term" value="P:phosphoenolpyruvate-dependent sugar phosphotransferase system"/>
    <property type="evidence" value="ECO:0007669"/>
    <property type="project" value="TreeGrafter"/>
</dbReference>
<dbReference type="FunFam" id="3.20.20.70:FF:000141">
    <property type="entry name" value="D-tagatose-1,6-bisphosphate aldolase subunit GatZ"/>
    <property type="match status" value="1"/>
</dbReference>
<dbReference type="Gene3D" id="3.20.20.70">
    <property type="entry name" value="Aldolase class I"/>
    <property type="match status" value="1"/>
</dbReference>
<dbReference type="Gene3D" id="1.10.400.20">
    <property type="entry name" value="putative tagatose 6-phosphate kinase domain like"/>
    <property type="match status" value="1"/>
</dbReference>
<dbReference type="HAMAP" id="MF_01296">
    <property type="entry name" value="Tagatose_aldol_GatZ"/>
    <property type="match status" value="1"/>
</dbReference>
<dbReference type="InterPro" id="IPR013785">
    <property type="entry name" value="Aldolase_TIM"/>
</dbReference>
<dbReference type="InterPro" id="IPR012062">
    <property type="entry name" value="GatZ/KbaZ-like"/>
</dbReference>
<dbReference type="InterPro" id="IPR050303">
    <property type="entry name" value="GatZ_KbaZ_carbometab"/>
</dbReference>
<dbReference type="InterPro" id="IPR023436">
    <property type="entry name" value="TagBP_ald_GatZ"/>
</dbReference>
<dbReference type="NCBIfam" id="TIGR02810">
    <property type="entry name" value="agaZ_gatZ"/>
    <property type="match status" value="1"/>
</dbReference>
<dbReference type="NCBIfam" id="NF011626">
    <property type="entry name" value="PRK15052.1"/>
    <property type="match status" value="1"/>
</dbReference>
<dbReference type="PANTHER" id="PTHR32502:SF12">
    <property type="entry name" value="D-TAGATOSE-1,6-BISPHOSPHATE ALDOLASE SUBUNIT GATZ"/>
    <property type="match status" value="1"/>
</dbReference>
<dbReference type="PANTHER" id="PTHR32502">
    <property type="entry name" value="N-ACETYLGALACTOSAMINE PERMEASE II COMPONENT-RELATED"/>
    <property type="match status" value="1"/>
</dbReference>
<dbReference type="Pfam" id="PF08013">
    <property type="entry name" value="GatZ_KbaZ-like"/>
    <property type="match status" value="1"/>
</dbReference>
<dbReference type="PIRSF" id="PIRSF009264">
    <property type="entry name" value="TagBP_ald_AgaZ"/>
    <property type="match status" value="1"/>
</dbReference>
<dbReference type="SUPFAM" id="SSF51569">
    <property type="entry name" value="Aldolase"/>
    <property type="match status" value="1"/>
</dbReference>
<reference key="1">
    <citation type="journal article" date="2004" name="Mol. Genet. Genomics">
        <title>The genes and enzymes for the catabolism of galactitol, D-tagatose, and related carbohydrates in Klebsiella oxytoca M5a1 and other enteric bacteria display convergent evolution.</title>
        <authorList>
            <person name="Shakeri-Garakani A."/>
            <person name="Brinkkoetter A."/>
            <person name="Schmid K."/>
            <person name="Turgut S."/>
            <person name="Lengeler J.W."/>
        </authorList>
    </citation>
    <scope>NUCLEOTIDE SEQUENCE [GENOMIC DNA]</scope>
    <scope>FUNCTION IN GALACTITOL AND D-TAGATOSE CATABOLISM</scope>
    <scope>INDUCTION</scope>
    <source>
        <strain>M5a1</strain>
    </source>
</reference>
<gene>
    <name type="primary">gatZ</name>
</gene>
<accession>Q8VS12</accession>
<protein>
    <recommendedName>
        <fullName>D-tagatose-1,6-bisphosphate aldolase subunit GatZ</fullName>
    </recommendedName>
</protein>
<feature type="chain" id="PRO_0000355360" description="D-tagatose-1,6-bisphosphate aldolase subunit GatZ">
    <location>
        <begin position="1"/>
        <end position="419"/>
    </location>
</feature>
<organism>
    <name type="scientific">Klebsiella oxytoca</name>
    <dbReference type="NCBI Taxonomy" id="571"/>
    <lineage>
        <taxon>Bacteria</taxon>
        <taxon>Pseudomonadati</taxon>
        <taxon>Pseudomonadota</taxon>
        <taxon>Gammaproteobacteria</taxon>
        <taxon>Enterobacterales</taxon>
        <taxon>Enterobacteriaceae</taxon>
        <taxon>Klebsiella/Raoultella group</taxon>
        <taxon>Klebsiella</taxon>
    </lineage>
</organism>
<name>GATZ_KLEOX</name>
<sequence length="419" mass="46646">MKDIISRHKAGEHIGICSVCSAHPLVIEAALSFDLHTNNKVLIEATSNQVNQFGGYTGMSCDFRDFVNKIAREVGFPSERIILGGDHLGPNCWQGEPAAEAMEKSVDLIKAYVAAGFSKIHLDASMSCADDPVPLDPAIVAERAARLCQAAEETATDEQKRHLTYVIGTEVPVPGGEASTIGSVHVTRAQDAAATLETHEAAFRKLGLNAALERVIAIVVQPGVEFDHTQIIHYQPEAAKALSAWIEGTPMVYEAHSTDYQSRQAYWALVRDHYAILKVGPALTFALREAIFSLAQMENELVAPESRSRVMEVIDEVMLNEPGYWKKYYRPTWSQAMADIHFSLSDRIRYYWPHPRIRQSVEKLIANLTETKLPLGLISQYIPVQFERLSLNELAAVPHDLILDKIQDVLRAYRYGRAI</sequence>